<gene>
    <name evidence="1" type="primary">flgI</name>
    <name type="ordered locus">SeHA_C1293</name>
</gene>
<comment type="function">
    <text evidence="1">Assembles around the rod to form the L-ring and probably protects the motor/basal body from shearing forces during rotation.</text>
</comment>
<comment type="subunit">
    <text evidence="1">The basal body constitutes a major portion of the flagellar organelle and consists of four rings (L,P,S, and M) mounted on a central rod.</text>
</comment>
<comment type="subcellular location">
    <subcellularLocation>
        <location evidence="1">Periplasm</location>
    </subcellularLocation>
    <subcellularLocation>
        <location evidence="1">Bacterial flagellum basal body</location>
    </subcellularLocation>
</comment>
<comment type="similarity">
    <text evidence="1">Belongs to the FlgI family.</text>
</comment>
<keyword id="KW-0975">Bacterial flagellum</keyword>
<keyword id="KW-0574">Periplasm</keyword>
<keyword id="KW-0732">Signal</keyword>
<reference key="1">
    <citation type="journal article" date="2011" name="J. Bacteriol.">
        <title>Comparative genomics of 28 Salmonella enterica isolates: evidence for CRISPR-mediated adaptive sublineage evolution.</title>
        <authorList>
            <person name="Fricke W.F."/>
            <person name="Mammel M.K."/>
            <person name="McDermott P.F."/>
            <person name="Tartera C."/>
            <person name="White D.G."/>
            <person name="Leclerc J.E."/>
            <person name="Ravel J."/>
            <person name="Cebula T.A."/>
        </authorList>
    </citation>
    <scope>NUCLEOTIDE SEQUENCE [LARGE SCALE GENOMIC DNA]</scope>
    <source>
        <strain>SL476</strain>
    </source>
</reference>
<dbReference type="EMBL" id="CP001120">
    <property type="protein sequence ID" value="ACF65985.1"/>
    <property type="molecule type" value="Genomic_DNA"/>
</dbReference>
<dbReference type="RefSeq" id="WP_001518955.1">
    <property type="nucleotide sequence ID" value="NC_011083.1"/>
</dbReference>
<dbReference type="SMR" id="B4TEV3"/>
<dbReference type="KEGG" id="seh:SeHA_C1293"/>
<dbReference type="HOGENOM" id="CLU_045235_1_0_6"/>
<dbReference type="Proteomes" id="UP000001866">
    <property type="component" value="Chromosome"/>
</dbReference>
<dbReference type="GO" id="GO:0009428">
    <property type="term" value="C:bacterial-type flagellum basal body, distal rod, P ring"/>
    <property type="evidence" value="ECO:0007669"/>
    <property type="project" value="InterPro"/>
</dbReference>
<dbReference type="GO" id="GO:0030288">
    <property type="term" value="C:outer membrane-bounded periplasmic space"/>
    <property type="evidence" value="ECO:0007669"/>
    <property type="project" value="InterPro"/>
</dbReference>
<dbReference type="GO" id="GO:0005198">
    <property type="term" value="F:structural molecule activity"/>
    <property type="evidence" value="ECO:0007669"/>
    <property type="project" value="InterPro"/>
</dbReference>
<dbReference type="GO" id="GO:0071973">
    <property type="term" value="P:bacterial-type flagellum-dependent cell motility"/>
    <property type="evidence" value="ECO:0007669"/>
    <property type="project" value="InterPro"/>
</dbReference>
<dbReference type="HAMAP" id="MF_00416">
    <property type="entry name" value="FlgI"/>
    <property type="match status" value="1"/>
</dbReference>
<dbReference type="InterPro" id="IPR001782">
    <property type="entry name" value="Flag_FlgI"/>
</dbReference>
<dbReference type="NCBIfam" id="NF003676">
    <property type="entry name" value="PRK05303.1"/>
    <property type="match status" value="1"/>
</dbReference>
<dbReference type="PANTHER" id="PTHR30381">
    <property type="entry name" value="FLAGELLAR P-RING PERIPLASMIC PROTEIN FLGI"/>
    <property type="match status" value="1"/>
</dbReference>
<dbReference type="PANTHER" id="PTHR30381:SF0">
    <property type="entry name" value="FLAGELLAR P-RING PROTEIN"/>
    <property type="match status" value="1"/>
</dbReference>
<dbReference type="Pfam" id="PF02119">
    <property type="entry name" value="FlgI"/>
    <property type="match status" value="1"/>
</dbReference>
<dbReference type="PRINTS" id="PR01010">
    <property type="entry name" value="FLGPRINGFLGI"/>
</dbReference>
<feature type="signal peptide" evidence="1">
    <location>
        <begin position="1"/>
        <end position="19"/>
    </location>
</feature>
<feature type="chain" id="PRO_1000123980" description="Flagellar P-ring protein">
    <location>
        <begin position="20"/>
        <end position="365"/>
    </location>
</feature>
<name>FLGI_SALHS</name>
<evidence type="ECO:0000255" key="1">
    <source>
        <dbReference type="HAMAP-Rule" id="MF_00416"/>
    </source>
</evidence>
<organism>
    <name type="scientific">Salmonella heidelberg (strain SL476)</name>
    <dbReference type="NCBI Taxonomy" id="454169"/>
    <lineage>
        <taxon>Bacteria</taxon>
        <taxon>Pseudomonadati</taxon>
        <taxon>Pseudomonadota</taxon>
        <taxon>Gammaproteobacteria</taxon>
        <taxon>Enterobacterales</taxon>
        <taxon>Enterobacteriaceae</taxon>
        <taxon>Salmonella</taxon>
    </lineage>
</organism>
<proteinExistence type="inferred from homology"/>
<accession>B4TEV3</accession>
<sequence>MFKALAGIVLALVATLAHAERIRDLTSVQGVRENSLIGYGLVVGLDGTGDQTTQTPFTTQTLNNMLSQLGITVPTGTNMQLKNVAAVMVTASYPPFARQGQTIDVVVSSMGNAKSLRGGTLLMTPLKGVDSQVYALAQGNILVGGAGASAGGSSVQVNQLNGGRITNGAIIERELPTQFGAGNTINLQLNDEDFTMAQQITDAINRARGYGSATALDARTVQVRVPSGNSSQVRFLADIQNMEVNVTPQDAKVVINSRTGSVVMNREVTLDSCAVAQGNLSVTVNRQLNVNQPNTPFGGGQTVVTPQTQIDLRQSGGSLQSVRSSANLNSVVRALNALGATPMDLMSILQSMQSAGCLRAKLEII</sequence>
<protein>
    <recommendedName>
        <fullName evidence="1">Flagellar P-ring protein</fullName>
    </recommendedName>
    <alternativeName>
        <fullName evidence="1">Basal body P-ring protein</fullName>
    </alternativeName>
</protein>